<protein>
    <recommendedName>
        <fullName evidence="1">UvrABC system protein C</fullName>
        <shortName evidence="1">Protein UvrC</shortName>
    </recommendedName>
    <alternativeName>
        <fullName evidence="1">Excinuclease ABC subunit C</fullName>
    </alternativeName>
</protein>
<accession>Q2GJJ1</accession>
<evidence type="ECO:0000255" key="1">
    <source>
        <dbReference type="HAMAP-Rule" id="MF_00203"/>
    </source>
</evidence>
<keyword id="KW-0963">Cytoplasm</keyword>
<keyword id="KW-0227">DNA damage</keyword>
<keyword id="KW-0228">DNA excision</keyword>
<keyword id="KW-0234">DNA repair</keyword>
<keyword id="KW-0267">Excision nuclease</keyword>
<keyword id="KW-0742">SOS response</keyword>
<sequence length="614" mass="70156">MKNSNERLNDAFYALKKATCSVRKSVPGVYKMFGTEDRLLYVGKAKDLKKRLSSYLSINRMSVNVYTMVKQIVRLEITVTENETEALLLEAKLIKSLKPKYNIIMRDDKFYPYILFSKHKYPRIVLHREKRSEGRYTGLYGPFLSSVMTRHIIATIKKAFLLRSCPDNFFATRARPCIEYEIKNCSAPCMQKITEEDYAKAVQMAHKALTGQSKEIQCELFEMMCRFSNNQDYESAIVCRDRLHALKSMKECMGFQTGIHGDVDFIAVYKRQDLYCMQVVFFRDGVNYGSQPYFIESVGNASDADIVNMFMLQIYNDFPSVVYVDLPSDYDTNIMSTAIKQLMKREVDIRLPATRDELKAMGLARNYAMEALNRRVRNTAQDTDLEEFATFFDLLKAPERIEIYDNSHISGTHPYGVMVVCGKDGLLKKEYRKFKINTVTNGDDCSMMHEVISRRFKEIPDVLPDFILIDGGRGQRSAVYGELSRLGIPFACIAKGPGRVAGTEVFYFSNGEKLSLDPASKLMHFLCRLRDEAHRFAITSHRKSRDGKLQFSTLLNDIPGIGKTKGKAILAYFGSIQAMKHARVEEISKVPGISLKLAKRVADYLKESQTTLRA</sequence>
<reference key="1">
    <citation type="journal article" date="2006" name="PLoS Genet.">
        <title>Comparative genomics of emerging human ehrlichiosis agents.</title>
        <authorList>
            <person name="Dunning Hotopp J.C."/>
            <person name="Lin M."/>
            <person name="Madupu R."/>
            <person name="Crabtree J."/>
            <person name="Angiuoli S.V."/>
            <person name="Eisen J.A."/>
            <person name="Seshadri R."/>
            <person name="Ren Q."/>
            <person name="Wu M."/>
            <person name="Utterback T.R."/>
            <person name="Smith S."/>
            <person name="Lewis M."/>
            <person name="Khouri H."/>
            <person name="Zhang C."/>
            <person name="Niu H."/>
            <person name="Lin Q."/>
            <person name="Ohashi N."/>
            <person name="Zhi N."/>
            <person name="Nelson W.C."/>
            <person name="Brinkac L.M."/>
            <person name="Dodson R.J."/>
            <person name="Rosovitz M.J."/>
            <person name="Sundaram J.P."/>
            <person name="Daugherty S.C."/>
            <person name="Davidsen T."/>
            <person name="Durkin A.S."/>
            <person name="Gwinn M.L."/>
            <person name="Haft D.H."/>
            <person name="Selengut J.D."/>
            <person name="Sullivan S.A."/>
            <person name="Zafar N."/>
            <person name="Zhou L."/>
            <person name="Benahmed F."/>
            <person name="Forberger H."/>
            <person name="Halpin R."/>
            <person name="Mulligan S."/>
            <person name="Robinson J."/>
            <person name="White O."/>
            <person name="Rikihisa Y."/>
            <person name="Tettelin H."/>
        </authorList>
    </citation>
    <scope>NUCLEOTIDE SEQUENCE [LARGE SCALE GENOMIC DNA]</scope>
    <source>
        <strain>HZ</strain>
    </source>
</reference>
<comment type="function">
    <text evidence="1">The UvrABC repair system catalyzes the recognition and processing of DNA lesions. UvrC both incises the 5' and 3' sides of the lesion. The N-terminal half is responsible for the 3' incision and the C-terminal half is responsible for the 5' incision.</text>
</comment>
<comment type="subunit">
    <text evidence="1">Interacts with UvrB in an incision complex.</text>
</comment>
<comment type="subcellular location">
    <subcellularLocation>
        <location evidence="1">Cytoplasm</location>
    </subcellularLocation>
</comment>
<comment type="similarity">
    <text evidence="1">Belongs to the UvrC family.</text>
</comment>
<feature type="chain" id="PRO_0000264865" description="UvrABC system protein C">
    <location>
        <begin position="1"/>
        <end position="614"/>
    </location>
</feature>
<feature type="domain" description="GIY-YIG" evidence="1">
    <location>
        <begin position="25"/>
        <end position="103"/>
    </location>
</feature>
<feature type="domain" description="UVR" evidence="1">
    <location>
        <begin position="214"/>
        <end position="249"/>
    </location>
</feature>
<name>UVRC_ANAPZ</name>
<gene>
    <name evidence="1" type="primary">uvrC</name>
    <name type="ordered locus">APH_0884</name>
</gene>
<dbReference type="EMBL" id="CP000235">
    <property type="protein sequence ID" value="ABD43625.1"/>
    <property type="molecule type" value="Genomic_DNA"/>
</dbReference>
<dbReference type="RefSeq" id="WP_011450974.1">
    <property type="nucleotide sequence ID" value="NC_007797.1"/>
</dbReference>
<dbReference type="SMR" id="Q2GJJ1"/>
<dbReference type="STRING" id="212042.APH_0884"/>
<dbReference type="PaxDb" id="212042-APH_0884"/>
<dbReference type="EnsemblBacteria" id="ABD43625">
    <property type="protein sequence ID" value="ABD43625"/>
    <property type="gene ID" value="APH_0884"/>
</dbReference>
<dbReference type="KEGG" id="aph:APH_0884"/>
<dbReference type="eggNOG" id="COG0322">
    <property type="taxonomic scope" value="Bacteria"/>
</dbReference>
<dbReference type="HOGENOM" id="CLU_014841_3_0_5"/>
<dbReference type="Proteomes" id="UP000001943">
    <property type="component" value="Chromosome"/>
</dbReference>
<dbReference type="GO" id="GO:0005737">
    <property type="term" value="C:cytoplasm"/>
    <property type="evidence" value="ECO:0007669"/>
    <property type="project" value="UniProtKB-SubCell"/>
</dbReference>
<dbReference type="GO" id="GO:0009380">
    <property type="term" value="C:excinuclease repair complex"/>
    <property type="evidence" value="ECO:0007669"/>
    <property type="project" value="InterPro"/>
</dbReference>
<dbReference type="GO" id="GO:0003677">
    <property type="term" value="F:DNA binding"/>
    <property type="evidence" value="ECO:0007669"/>
    <property type="project" value="UniProtKB-UniRule"/>
</dbReference>
<dbReference type="GO" id="GO:0009381">
    <property type="term" value="F:excinuclease ABC activity"/>
    <property type="evidence" value="ECO:0007669"/>
    <property type="project" value="UniProtKB-UniRule"/>
</dbReference>
<dbReference type="GO" id="GO:0006289">
    <property type="term" value="P:nucleotide-excision repair"/>
    <property type="evidence" value="ECO:0007669"/>
    <property type="project" value="UniProtKB-UniRule"/>
</dbReference>
<dbReference type="GO" id="GO:0009432">
    <property type="term" value="P:SOS response"/>
    <property type="evidence" value="ECO:0007669"/>
    <property type="project" value="UniProtKB-UniRule"/>
</dbReference>
<dbReference type="CDD" id="cd10434">
    <property type="entry name" value="GIY-YIG_UvrC_Cho"/>
    <property type="match status" value="1"/>
</dbReference>
<dbReference type="FunFam" id="3.40.1440.10:FF:000001">
    <property type="entry name" value="UvrABC system protein C"/>
    <property type="match status" value="1"/>
</dbReference>
<dbReference type="Gene3D" id="1.10.150.20">
    <property type="entry name" value="5' to 3' exonuclease, C-terminal subdomain"/>
    <property type="match status" value="1"/>
</dbReference>
<dbReference type="Gene3D" id="3.40.1440.10">
    <property type="entry name" value="GIY-YIG endonuclease"/>
    <property type="match status" value="1"/>
</dbReference>
<dbReference type="Gene3D" id="3.30.420.340">
    <property type="entry name" value="UvrC, RNAse H endonuclease domain"/>
    <property type="match status" value="1"/>
</dbReference>
<dbReference type="HAMAP" id="MF_00203">
    <property type="entry name" value="UvrC"/>
    <property type="match status" value="1"/>
</dbReference>
<dbReference type="InterPro" id="IPR000305">
    <property type="entry name" value="GIY-YIG_endonuc"/>
</dbReference>
<dbReference type="InterPro" id="IPR035901">
    <property type="entry name" value="GIY-YIG_endonuc_sf"/>
</dbReference>
<dbReference type="InterPro" id="IPR047296">
    <property type="entry name" value="GIY-YIG_UvrC_Cho"/>
</dbReference>
<dbReference type="InterPro" id="IPR003583">
    <property type="entry name" value="Hlx-hairpin-Hlx_DNA-bd_motif"/>
</dbReference>
<dbReference type="InterPro" id="IPR010994">
    <property type="entry name" value="RuvA_2-like"/>
</dbReference>
<dbReference type="InterPro" id="IPR036876">
    <property type="entry name" value="UVR_dom_sf"/>
</dbReference>
<dbReference type="InterPro" id="IPR050066">
    <property type="entry name" value="UvrABC_protein_C"/>
</dbReference>
<dbReference type="InterPro" id="IPR004791">
    <property type="entry name" value="UvrC"/>
</dbReference>
<dbReference type="InterPro" id="IPR001162">
    <property type="entry name" value="UvrC_RNase_H_dom"/>
</dbReference>
<dbReference type="InterPro" id="IPR038476">
    <property type="entry name" value="UvrC_RNase_H_dom_sf"/>
</dbReference>
<dbReference type="NCBIfam" id="TIGR00194">
    <property type="entry name" value="uvrC"/>
    <property type="match status" value="1"/>
</dbReference>
<dbReference type="PANTHER" id="PTHR30562:SF1">
    <property type="entry name" value="UVRABC SYSTEM PROTEIN C"/>
    <property type="match status" value="1"/>
</dbReference>
<dbReference type="PANTHER" id="PTHR30562">
    <property type="entry name" value="UVRC/OXIDOREDUCTASE"/>
    <property type="match status" value="1"/>
</dbReference>
<dbReference type="Pfam" id="PF01541">
    <property type="entry name" value="GIY-YIG"/>
    <property type="match status" value="1"/>
</dbReference>
<dbReference type="Pfam" id="PF14520">
    <property type="entry name" value="HHH_5"/>
    <property type="match status" value="1"/>
</dbReference>
<dbReference type="Pfam" id="PF22920">
    <property type="entry name" value="UvrC_RNaseH"/>
    <property type="match status" value="1"/>
</dbReference>
<dbReference type="Pfam" id="PF08459">
    <property type="entry name" value="UvrC_RNaseH_dom"/>
    <property type="match status" value="1"/>
</dbReference>
<dbReference type="SMART" id="SM00465">
    <property type="entry name" value="GIYc"/>
    <property type="match status" value="1"/>
</dbReference>
<dbReference type="SMART" id="SM00278">
    <property type="entry name" value="HhH1"/>
    <property type="match status" value="2"/>
</dbReference>
<dbReference type="SUPFAM" id="SSF46600">
    <property type="entry name" value="C-terminal UvrC-binding domain of UvrB"/>
    <property type="match status" value="1"/>
</dbReference>
<dbReference type="SUPFAM" id="SSF82771">
    <property type="entry name" value="GIY-YIG endonuclease"/>
    <property type="match status" value="1"/>
</dbReference>
<dbReference type="SUPFAM" id="SSF47781">
    <property type="entry name" value="RuvA domain 2-like"/>
    <property type="match status" value="1"/>
</dbReference>
<dbReference type="PROSITE" id="PS50164">
    <property type="entry name" value="GIY_YIG"/>
    <property type="match status" value="1"/>
</dbReference>
<dbReference type="PROSITE" id="PS50165">
    <property type="entry name" value="UVRC"/>
    <property type="match status" value="1"/>
</dbReference>
<proteinExistence type="inferred from homology"/>
<organism>
    <name type="scientific">Anaplasma phagocytophilum (strain HZ)</name>
    <dbReference type="NCBI Taxonomy" id="212042"/>
    <lineage>
        <taxon>Bacteria</taxon>
        <taxon>Pseudomonadati</taxon>
        <taxon>Pseudomonadota</taxon>
        <taxon>Alphaproteobacteria</taxon>
        <taxon>Rickettsiales</taxon>
        <taxon>Anaplasmataceae</taxon>
        <taxon>Anaplasma</taxon>
        <taxon>phagocytophilum group</taxon>
    </lineage>
</organism>